<sequence>MHIVICIKQVPDSAQIRVDPVTNTIMRQGVPTIINPYDLFALEERSSCASHGGEVTVLTMGPPMAEDALRKALTVADRAVLLTERHFAGSDTLATSFALSRAIAKIGEAFGTPDIVFTAKQTIDGDTAQVGPGIAKRLDLLQLTYVAKIVSVDINGREITVERRSEGGTQTLMSKLPCLITMLEGTNEIRRGSLDDALRAARSQIVKWNAADAGIEDLTKCGLRGSPTVVKRVFAPPERAEKAEQIDTAEKTPRDLAEELIAGIFLRSGVESELAFDAN</sequence>
<feature type="chain" id="PRO_0000167889" description="Protein FixA">
    <location>
        <begin position="1"/>
        <end position="279"/>
    </location>
</feature>
<organism>
    <name type="scientific">Rhizobium leguminosarum bv. phaseoli</name>
    <dbReference type="NCBI Taxonomy" id="385"/>
    <lineage>
        <taxon>Bacteria</taxon>
        <taxon>Pseudomonadati</taxon>
        <taxon>Pseudomonadota</taxon>
        <taxon>Alphaproteobacteria</taxon>
        <taxon>Hyphomicrobiales</taxon>
        <taxon>Rhizobiaceae</taxon>
        <taxon>Rhizobium/Agrobacterium group</taxon>
        <taxon>Rhizobium</taxon>
    </lineage>
</organism>
<keyword id="KW-0249">Electron transport</keyword>
<keyword id="KW-0535">Nitrogen fixation</keyword>
<keyword id="KW-0813">Transport</keyword>
<proteinExistence type="inferred from homology"/>
<reference key="1">
    <citation type="journal article" date="1993" name="Biochim. Biophys. Acta">
        <title>Cloning and sequence of the Rhizobium leguminosarum biovar phaseoli fixA gene.</title>
        <authorList>
            <person name="Michiels J."/>
            <person name="Vanderleyden J."/>
        </authorList>
    </citation>
    <scope>NUCLEOTIDE SEQUENCE [GENOMIC DNA]</scope>
</reference>
<evidence type="ECO:0000305" key="1"/>
<protein>
    <recommendedName>
        <fullName>Protein FixA</fullName>
    </recommendedName>
</protein>
<name>FIXA_RHILP</name>
<dbReference type="EMBL" id="L11081">
    <property type="protein sequence ID" value="AAA02979.1"/>
    <property type="molecule type" value="Unassigned_DNA"/>
</dbReference>
<dbReference type="SMR" id="Q05559"/>
<dbReference type="GO" id="GO:0009055">
    <property type="term" value="F:electron transfer activity"/>
    <property type="evidence" value="ECO:0007669"/>
    <property type="project" value="InterPro"/>
</dbReference>
<dbReference type="GO" id="GO:0009399">
    <property type="term" value="P:nitrogen fixation"/>
    <property type="evidence" value="ECO:0007669"/>
    <property type="project" value="UniProtKB-KW"/>
</dbReference>
<dbReference type="CDD" id="cd01714">
    <property type="entry name" value="ETF_beta"/>
    <property type="match status" value="1"/>
</dbReference>
<dbReference type="Gene3D" id="3.40.50.620">
    <property type="entry name" value="HUPs"/>
    <property type="match status" value="1"/>
</dbReference>
<dbReference type="InterPro" id="IPR000049">
    <property type="entry name" value="ET-Flavoprotein_bsu_CS"/>
</dbReference>
<dbReference type="InterPro" id="IPR014730">
    <property type="entry name" value="ETF_a/b_N"/>
</dbReference>
<dbReference type="InterPro" id="IPR012255">
    <property type="entry name" value="ETF_b"/>
</dbReference>
<dbReference type="InterPro" id="IPR033948">
    <property type="entry name" value="ETF_beta_N"/>
</dbReference>
<dbReference type="InterPro" id="IPR014729">
    <property type="entry name" value="Rossmann-like_a/b/a_fold"/>
</dbReference>
<dbReference type="PANTHER" id="PTHR21294">
    <property type="entry name" value="ELECTRON TRANSFER FLAVOPROTEIN BETA-SUBUNIT"/>
    <property type="match status" value="1"/>
</dbReference>
<dbReference type="PANTHER" id="PTHR21294:SF17">
    <property type="entry name" value="PROTEIN FIXA"/>
    <property type="match status" value="1"/>
</dbReference>
<dbReference type="Pfam" id="PF01012">
    <property type="entry name" value="ETF"/>
    <property type="match status" value="1"/>
</dbReference>
<dbReference type="PIRSF" id="PIRSF000090">
    <property type="entry name" value="Beta-ETF"/>
    <property type="match status" value="1"/>
</dbReference>
<dbReference type="SMART" id="SM00893">
    <property type="entry name" value="ETF"/>
    <property type="match status" value="1"/>
</dbReference>
<dbReference type="SUPFAM" id="SSF52402">
    <property type="entry name" value="Adenine nucleotide alpha hydrolases-like"/>
    <property type="match status" value="1"/>
</dbReference>
<dbReference type="PROSITE" id="PS01065">
    <property type="entry name" value="ETF_BETA"/>
    <property type="match status" value="1"/>
</dbReference>
<accession>Q05559</accession>
<comment type="function">
    <text>May play a role in a redox process involved in nitrogen fixation.</text>
</comment>
<comment type="subunit">
    <text evidence="1">FixA and FixB form a heterodimer.</text>
</comment>
<comment type="similarity">
    <text evidence="1">Belongs to the ETF beta-subunit/FixA family.</text>
</comment>
<gene>
    <name type="primary">fixA</name>
</gene>